<gene>
    <name evidence="7" type="primary">pduK</name>
</gene>
<organism>
    <name type="scientific">Citrobacter freundii</name>
    <dbReference type="NCBI Taxonomy" id="546"/>
    <lineage>
        <taxon>Bacteria</taxon>
        <taxon>Pseudomonadati</taxon>
        <taxon>Pseudomonadota</taxon>
        <taxon>Gammaproteobacteria</taxon>
        <taxon>Enterobacterales</taxon>
        <taxon>Enterobacteriaceae</taxon>
        <taxon>Citrobacter</taxon>
        <taxon>Citrobacter freundii complex</taxon>
    </lineage>
</organism>
<accession>B1VB70</accession>
<evidence type="ECO:0000250" key="1">
    <source>
        <dbReference type="UniProtKB" id="Q9XDN6"/>
    </source>
</evidence>
<evidence type="ECO:0000255" key="2">
    <source>
        <dbReference type="PROSITE-ProRule" id="PRU01278"/>
    </source>
</evidence>
<evidence type="ECO:0000256" key="3">
    <source>
        <dbReference type="SAM" id="MobiDB-lite"/>
    </source>
</evidence>
<evidence type="ECO:0000269" key="4">
    <source>
    </source>
</evidence>
<evidence type="ECO:0000269" key="5">
    <source>
    </source>
</evidence>
<evidence type="ECO:0000269" key="6">
    <source>
    </source>
</evidence>
<evidence type="ECO:0000303" key="7">
    <source>
    </source>
</evidence>
<evidence type="ECO:0000305" key="8">
    <source>
    </source>
</evidence>
<name>PDUK_CITFR</name>
<keyword id="KW-1283">Bacterial microcompartment</keyword>
<keyword id="KW-0408">Iron</keyword>
<sequence>MKQSLGLLEVSGLALAISCADVMAKAASITLVGLEKTNGSGWMVIKIIGDVASVQAAISTGVSFADQRDGLVAHKVISRPGDGILSHSVTPESESEPAPAPTPVVPHEEIPEDHAAPEAPQDAELISCNLCLDPACPRQKGEPRSLCLHSGKRGEA</sequence>
<protein>
    <recommendedName>
        <fullName evidence="7">Bacterial microcompartment shell protein PduK</fullName>
    </recommendedName>
    <alternativeName>
        <fullName>Propanediol utilization protein PduK</fullName>
    </alternativeName>
</protein>
<dbReference type="EMBL" id="AM498294">
    <property type="protein sequence ID" value="CAM57291.1"/>
    <property type="molecule type" value="Genomic_DNA"/>
</dbReference>
<dbReference type="SMR" id="B1VB70"/>
<dbReference type="UniPathway" id="UPA00621"/>
<dbReference type="GO" id="GO:0031469">
    <property type="term" value="C:bacterial microcompartment"/>
    <property type="evidence" value="ECO:0007669"/>
    <property type="project" value="UniProtKB-SubCell"/>
</dbReference>
<dbReference type="GO" id="GO:0051144">
    <property type="term" value="P:propanediol catabolic process"/>
    <property type="evidence" value="ECO:0007669"/>
    <property type="project" value="UniProtKB-UniPathway"/>
</dbReference>
<dbReference type="CDD" id="cd07056">
    <property type="entry name" value="BMC_PduK"/>
    <property type="match status" value="1"/>
</dbReference>
<dbReference type="Gene3D" id="3.30.70.1710">
    <property type="match status" value="1"/>
</dbReference>
<dbReference type="InterPro" id="IPR000249">
    <property type="entry name" value="BMC_dom"/>
</dbReference>
<dbReference type="InterPro" id="IPR050575">
    <property type="entry name" value="BMC_shell"/>
</dbReference>
<dbReference type="InterPro" id="IPR037233">
    <property type="entry name" value="CcmK-like_sf"/>
</dbReference>
<dbReference type="InterPro" id="IPR044872">
    <property type="entry name" value="CcmK/CsoS1_BMC"/>
</dbReference>
<dbReference type="PANTHER" id="PTHR33941:SF11">
    <property type="entry name" value="BACTERIAL MICROCOMPARTMENT SHELL PROTEIN PDUJ"/>
    <property type="match status" value="1"/>
</dbReference>
<dbReference type="PANTHER" id="PTHR33941">
    <property type="entry name" value="PROPANEDIOL UTILIZATION PROTEIN PDUA"/>
    <property type="match status" value="1"/>
</dbReference>
<dbReference type="Pfam" id="PF00936">
    <property type="entry name" value="BMC"/>
    <property type="match status" value="1"/>
</dbReference>
<dbReference type="SMART" id="SM00877">
    <property type="entry name" value="BMC"/>
    <property type="match status" value="1"/>
</dbReference>
<dbReference type="SUPFAM" id="SSF143414">
    <property type="entry name" value="CcmK-like"/>
    <property type="match status" value="1"/>
</dbReference>
<dbReference type="PROSITE" id="PS51930">
    <property type="entry name" value="BMC_2"/>
    <property type="match status" value="1"/>
</dbReference>
<reference key="1">
    <citation type="journal article" date="2008" name="J. Biol. Chem.">
        <title>Biochemical and Structural Insights into Bacterial Organelle Form and Biogenesis.</title>
        <authorList>
            <person name="Parsons J.B."/>
            <person name="Dinesh S.D."/>
            <person name="Deery E."/>
            <person name="Leech H.K."/>
            <person name="Brindley A.A."/>
            <person name="Heldt D."/>
            <person name="Frank S."/>
            <person name="Smales C.M."/>
            <person name="Lunsdorf H."/>
            <person name="Rambach A."/>
            <person name="Gass M.H."/>
            <person name="Bleloch A."/>
            <person name="McClean K.J."/>
            <person name="Munro A.W."/>
            <person name="Rigby S.E.J."/>
            <person name="Warren M.J."/>
            <person name="Prentice M.B."/>
        </authorList>
    </citation>
    <scope>NUCLEOTIDE SEQUENCE [GENOMIC DNA]</scope>
    <scope>FUNCTION</scope>
    <scope>PATHWAY</scope>
</reference>
<reference key="2">
    <citation type="journal article" date="2010" name="Mol. Cell">
        <title>Synthesis of empty bacterial microcompartments, directed organelle protein incorporation, and evidence of filament-associated organelle movement.</title>
        <authorList>
            <person name="Parsons J.B."/>
            <person name="Frank S."/>
            <person name="Bhella D."/>
            <person name="Liang M."/>
            <person name="Prentice M.B."/>
            <person name="Mulvihill D.P."/>
            <person name="Warren M.J."/>
        </authorList>
    </citation>
    <scope>FUNCTION</scope>
    <scope>INTERACTION WITH PDUA AND PDUM</scope>
    <scope>SUBCELLULAR LOCATION</scope>
    <scope>BIOTECHNOLOGY</scope>
</reference>
<reference key="3">
    <citation type="journal article" date="2014" name="ACS Synth. Biol.">
        <title>Solution structure of a bacterial microcompartment targeting peptide and its application in the construction of an ethanol bioreactor.</title>
        <authorList>
            <person name="Lawrence A.D."/>
            <person name="Frank S."/>
            <person name="Newnham S."/>
            <person name="Lee M.J."/>
            <person name="Brown I.R."/>
            <person name="Xue W.F."/>
            <person name="Rowe M.L."/>
            <person name="Mulvihill D.P."/>
            <person name="Prentice M.B."/>
            <person name="Howard M.J."/>
            <person name="Warren M.J."/>
        </authorList>
    </citation>
    <scope>INTERACTION WITH PDUP</scope>
    <scope>BIOTECHNOLOGY</scope>
</reference>
<proteinExistence type="evidence at protein level"/>
<feature type="chain" id="PRO_0000454253" description="Bacterial microcompartment shell protein PduK">
    <location>
        <begin position="1"/>
        <end position="156"/>
    </location>
</feature>
<feature type="domain" description="BMC" evidence="2">
    <location>
        <begin position="4"/>
        <end position="89"/>
    </location>
</feature>
<feature type="region of interest" description="Disordered" evidence="3">
    <location>
        <begin position="81"/>
        <end position="119"/>
    </location>
</feature>
<feature type="compositionally biased region" description="Basic and acidic residues" evidence="3">
    <location>
        <begin position="106"/>
        <end position="116"/>
    </location>
</feature>
<comment type="function">
    <text evidence="8">A minor shell protein of the bacterial microcompartment (BMC) dedicated to 1,2-propanediol (1,2-PD) degradation.</text>
</comment>
<comment type="function">
    <text evidence="4">Expression of a cosmid containing the full 21-gene pdu operon in E.coli allows E.coli to grow on 1,2-propanediol (1,2-PD) with the appearance of bacterial microcompartments (BMC) in its cytoplasm. Overexpression of this protein leads to the appearance of a single large aggregate complex in the cytoplasm.</text>
</comment>
<comment type="function">
    <text evidence="8">The 1,2-PD-specific bacterial microcompartment (BMC) concentrates low levels of 1,2-PD catabolic enzymes, concentrates volatile reaction intermediates thus enhancing pathway flux and keeps the level of toxic, mutagenic propionaldehyde low.</text>
</comment>
<comment type="cofactor">
    <cofactor evidence="1">
        <name>Fe cation</name>
        <dbReference type="ChEBI" id="CHEBI:24875"/>
    </cofactor>
    <text evidence="1">Might bind an [Fe-S] cluster in vivo.</text>
</comment>
<comment type="pathway">
    <text evidence="4">Polyol metabolism; 1,2-propanediol degradation.</text>
</comment>
<comment type="subunit">
    <text evidence="5 6">Interacts with shell protein PduA and assembly protein PduM (PubMed:20417607). Interacts with PduP, probably with its first 18 residues (PubMed:24933391).</text>
</comment>
<comment type="subcellular location">
    <subcellularLocation>
        <location evidence="5">Bacterial microcompartment</location>
    </subcellularLocation>
</comment>
<comment type="biotechnology">
    <text evidence="5 6">Artificial BMCs can be made in E.coli by expressing pduA-pduB/B'-pduJ-pduK-pduN-pduU-pduT (in this order); pduT and pduU are optional, while pduA, pduB/B', pduJ, pduK and pduN are essential. A construct with the reversed gene order does not make BMCs (PubMed:20417607). Ethanogenic BMCs can be made in E.coli by targeting pyruvate decarboxylase (pdc) and alcohol dehydrogenase (adh) to them. PduP(1-18)-Pdc and PduD(1-18)-Adh strains targeted to the BMC (PduA, PduB, PduJ, PduK, PduN, PduU) make significantly more ethanol than strains where Pdc and Adh are not targeted to the BMC (PubMed:24933391).</text>
</comment>
<comment type="similarity">
    <text evidence="2">Belongs to the bacterial microcompartments protein family.</text>
</comment>